<protein>
    <recommendedName>
        <fullName evidence="1">Ribosome maturation factor RimM</fullName>
    </recommendedName>
</protein>
<feature type="chain" id="PRO_0000351723" description="Ribosome maturation factor RimM">
    <location>
        <begin position="1"/>
        <end position="173"/>
    </location>
</feature>
<feature type="domain" description="PRC barrel" evidence="1">
    <location>
        <begin position="78"/>
        <end position="157"/>
    </location>
</feature>
<feature type="region of interest" description="Disordered" evidence="2">
    <location>
        <begin position="152"/>
        <end position="173"/>
    </location>
</feature>
<sequence length="173" mass="18608">MRGEVRLQSFTEVPQAISAYGPLSDASGKKSFSIASLRLVKNAVFVARIEGVTTREAAEALTNLSLYVSREALPPPEEEEFYLADLIGLDAFVADADGKEVLFGRIADVLNFGGGDILEIAPSDGGETRLLPFTRQVVPRIDLTARRVLVVPPEEVEAQEPPEKDAGGDEPSP</sequence>
<dbReference type="EMBL" id="CP001016">
    <property type="protein sequence ID" value="ACB96910.1"/>
    <property type="molecule type" value="Genomic_DNA"/>
</dbReference>
<dbReference type="SMR" id="B2IDX8"/>
<dbReference type="STRING" id="395963.Bind_3353"/>
<dbReference type="KEGG" id="bid:Bind_3353"/>
<dbReference type="eggNOG" id="COG0806">
    <property type="taxonomic scope" value="Bacteria"/>
</dbReference>
<dbReference type="HOGENOM" id="CLU_077636_0_1_5"/>
<dbReference type="Proteomes" id="UP000001695">
    <property type="component" value="Chromosome"/>
</dbReference>
<dbReference type="GO" id="GO:0005737">
    <property type="term" value="C:cytoplasm"/>
    <property type="evidence" value="ECO:0007669"/>
    <property type="project" value="UniProtKB-SubCell"/>
</dbReference>
<dbReference type="GO" id="GO:0005840">
    <property type="term" value="C:ribosome"/>
    <property type="evidence" value="ECO:0007669"/>
    <property type="project" value="InterPro"/>
</dbReference>
<dbReference type="GO" id="GO:0043022">
    <property type="term" value="F:ribosome binding"/>
    <property type="evidence" value="ECO:0007669"/>
    <property type="project" value="InterPro"/>
</dbReference>
<dbReference type="GO" id="GO:0042274">
    <property type="term" value="P:ribosomal small subunit biogenesis"/>
    <property type="evidence" value="ECO:0007669"/>
    <property type="project" value="UniProtKB-UniRule"/>
</dbReference>
<dbReference type="GO" id="GO:0006364">
    <property type="term" value="P:rRNA processing"/>
    <property type="evidence" value="ECO:0007669"/>
    <property type="project" value="UniProtKB-UniRule"/>
</dbReference>
<dbReference type="Gene3D" id="2.30.30.240">
    <property type="entry name" value="PRC-barrel domain"/>
    <property type="match status" value="1"/>
</dbReference>
<dbReference type="Gene3D" id="2.40.30.60">
    <property type="entry name" value="RimM"/>
    <property type="match status" value="1"/>
</dbReference>
<dbReference type="HAMAP" id="MF_00014">
    <property type="entry name" value="Ribosome_mat_RimM"/>
    <property type="match status" value="1"/>
</dbReference>
<dbReference type="InterPro" id="IPR011033">
    <property type="entry name" value="PRC_barrel-like_sf"/>
</dbReference>
<dbReference type="InterPro" id="IPR056792">
    <property type="entry name" value="PRC_RimM"/>
</dbReference>
<dbReference type="InterPro" id="IPR011961">
    <property type="entry name" value="RimM"/>
</dbReference>
<dbReference type="InterPro" id="IPR002676">
    <property type="entry name" value="RimM_N"/>
</dbReference>
<dbReference type="InterPro" id="IPR036976">
    <property type="entry name" value="RimM_N_sf"/>
</dbReference>
<dbReference type="InterPro" id="IPR009000">
    <property type="entry name" value="Transl_B-barrel_sf"/>
</dbReference>
<dbReference type="NCBIfam" id="TIGR02273">
    <property type="entry name" value="16S_RimM"/>
    <property type="match status" value="1"/>
</dbReference>
<dbReference type="PANTHER" id="PTHR33692">
    <property type="entry name" value="RIBOSOME MATURATION FACTOR RIMM"/>
    <property type="match status" value="1"/>
</dbReference>
<dbReference type="PANTHER" id="PTHR33692:SF1">
    <property type="entry name" value="RIBOSOME MATURATION FACTOR RIMM"/>
    <property type="match status" value="1"/>
</dbReference>
<dbReference type="Pfam" id="PF24986">
    <property type="entry name" value="PRC_RimM"/>
    <property type="match status" value="1"/>
</dbReference>
<dbReference type="Pfam" id="PF01782">
    <property type="entry name" value="RimM"/>
    <property type="match status" value="1"/>
</dbReference>
<dbReference type="SUPFAM" id="SSF50346">
    <property type="entry name" value="PRC-barrel domain"/>
    <property type="match status" value="1"/>
</dbReference>
<dbReference type="SUPFAM" id="SSF50447">
    <property type="entry name" value="Translation proteins"/>
    <property type="match status" value="1"/>
</dbReference>
<keyword id="KW-0143">Chaperone</keyword>
<keyword id="KW-0963">Cytoplasm</keyword>
<keyword id="KW-1185">Reference proteome</keyword>
<keyword id="KW-0690">Ribosome biogenesis</keyword>
<keyword id="KW-0698">rRNA processing</keyword>
<proteinExistence type="inferred from homology"/>
<organism>
    <name type="scientific">Beijerinckia indica subsp. indica (strain ATCC 9039 / DSM 1715 / NCIMB 8712)</name>
    <dbReference type="NCBI Taxonomy" id="395963"/>
    <lineage>
        <taxon>Bacteria</taxon>
        <taxon>Pseudomonadati</taxon>
        <taxon>Pseudomonadota</taxon>
        <taxon>Alphaproteobacteria</taxon>
        <taxon>Hyphomicrobiales</taxon>
        <taxon>Beijerinckiaceae</taxon>
        <taxon>Beijerinckia</taxon>
    </lineage>
</organism>
<gene>
    <name evidence="1" type="primary">rimM</name>
    <name type="ordered locus">Bind_3353</name>
</gene>
<accession>B2IDX8</accession>
<reference key="1">
    <citation type="journal article" date="2010" name="J. Bacteriol.">
        <title>Complete genome sequence of Beijerinckia indica subsp. indica.</title>
        <authorList>
            <person name="Tamas I."/>
            <person name="Dedysh S.N."/>
            <person name="Liesack W."/>
            <person name="Stott M.B."/>
            <person name="Alam M."/>
            <person name="Murrell J.C."/>
            <person name="Dunfield P.F."/>
        </authorList>
    </citation>
    <scope>NUCLEOTIDE SEQUENCE [LARGE SCALE GENOMIC DNA]</scope>
    <source>
        <strain>ATCC 9039 / DSM 1715 / NCIMB 8712</strain>
    </source>
</reference>
<name>RIMM_BEII9</name>
<evidence type="ECO:0000255" key="1">
    <source>
        <dbReference type="HAMAP-Rule" id="MF_00014"/>
    </source>
</evidence>
<evidence type="ECO:0000256" key="2">
    <source>
        <dbReference type="SAM" id="MobiDB-lite"/>
    </source>
</evidence>
<comment type="function">
    <text evidence="1">An accessory protein needed during the final step in the assembly of 30S ribosomal subunit, possibly for assembly of the head region. Essential for efficient processing of 16S rRNA. May be needed both before and after RbfA during the maturation of 16S rRNA. It has affinity for free ribosomal 30S subunits but not for 70S ribosomes.</text>
</comment>
<comment type="subunit">
    <text evidence="1">Binds ribosomal protein uS19.</text>
</comment>
<comment type="subcellular location">
    <subcellularLocation>
        <location evidence="1">Cytoplasm</location>
    </subcellularLocation>
</comment>
<comment type="domain">
    <text evidence="1">The PRC barrel domain binds ribosomal protein uS19.</text>
</comment>
<comment type="similarity">
    <text evidence="1">Belongs to the RimM family.</text>
</comment>